<gene>
    <name evidence="1" type="primary">fbp</name>
</gene>
<protein>
    <recommendedName>
        <fullName evidence="1">Fructose-1,6-bisphosphatase class 3</fullName>
        <shortName evidence="1">FBPase class 3</shortName>
        <ecNumber evidence="1">3.1.3.11</ecNumber>
    </recommendedName>
    <alternativeName>
        <fullName evidence="1">D-fructose-1,6-bisphosphate 1-phosphohydrolase class 3</fullName>
    </alternativeName>
</protein>
<feature type="chain" id="PRO_0000363111" description="Fructose-1,6-bisphosphatase class 3">
    <location>
        <begin position="1"/>
        <end position="650"/>
    </location>
</feature>
<dbReference type="EC" id="3.1.3.11" evidence="1"/>
<dbReference type="EMBL" id="DQ472006">
    <property type="protein sequence ID" value="ABF13435.1"/>
    <property type="molecule type" value="Genomic_DNA"/>
</dbReference>
<dbReference type="RefSeq" id="WP_047171898.1">
    <property type="nucleotide sequence ID" value="NZ_LN554884.1"/>
</dbReference>
<dbReference type="STRING" id="1288.AWC37_09910"/>
<dbReference type="KEGG" id="sxo:SXYL_00426"/>
<dbReference type="eggNOG" id="COG3855">
    <property type="taxonomic scope" value="Bacteria"/>
</dbReference>
<dbReference type="UniPathway" id="UPA00138"/>
<dbReference type="GO" id="GO:0042132">
    <property type="term" value="F:fructose 1,6-bisphosphate 1-phosphatase activity"/>
    <property type="evidence" value="ECO:0007669"/>
    <property type="project" value="UniProtKB-UniRule"/>
</dbReference>
<dbReference type="GO" id="GO:0006094">
    <property type="term" value="P:gluconeogenesis"/>
    <property type="evidence" value="ECO:0007669"/>
    <property type="project" value="UniProtKB-UniRule"/>
</dbReference>
<dbReference type="Gene3D" id="3.60.21.10">
    <property type="match status" value="1"/>
</dbReference>
<dbReference type="HAMAP" id="MF_01854">
    <property type="entry name" value="FBPase_class3"/>
    <property type="match status" value="1"/>
</dbReference>
<dbReference type="InterPro" id="IPR009164">
    <property type="entry name" value="FBPtase_class3"/>
</dbReference>
<dbReference type="InterPro" id="IPR029052">
    <property type="entry name" value="Metallo-depent_PP-like"/>
</dbReference>
<dbReference type="Pfam" id="PF06874">
    <property type="entry name" value="FBPase_2"/>
    <property type="match status" value="1"/>
</dbReference>
<dbReference type="PIRSF" id="PIRSF000906">
    <property type="entry name" value="FBPtase_Bacill"/>
    <property type="match status" value="1"/>
</dbReference>
<dbReference type="SUPFAM" id="SSF56300">
    <property type="entry name" value="Metallo-dependent phosphatases"/>
    <property type="match status" value="1"/>
</dbReference>
<keyword id="KW-0119">Carbohydrate metabolism</keyword>
<keyword id="KW-0378">Hydrolase</keyword>
<keyword id="KW-0464">Manganese</keyword>
<organism>
    <name type="scientific">Staphylococcus xylosus</name>
    <dbReference type="NCBI Taxonomy" id="1288"/>
    <lineage>
        <taxon>Bacteria</taxon>
        <taxon>Bacillati</taxon>
        <taxon>Bacillota</taxon>
        <taxon>Bacilli</taxon>
        <taxon>Bacillales</taxon>
        <taxon>Staphylococcaceae</taxon>
        <taxon>Staphylococcus</taxon>
    </lineage>
</organism>
<comment type="catalytic activity">
    <reaction evidence="1">
        <text>beta-D-fructose 1,6-bisphosphate + H2O = beta-D-fructose 6-phosphate + phosphate</text>
        <dbReference type="Rhea" id="RHEA:11064"/>
        <dbReference type="ChEBI" id="CHEBI:15377"/>
        <dbReference type="ChEBI" id="CHEBI:32966"/>
        <dbReference type="ChEBI" id="CHEBI:43474"/>
        <dbReference type="ChEBI" id="CHEBI:57634"/>
        <dbReference type="EC" id="3.1.3.11"/>
    </reaction>
</comment>
<comment type="cofactor">
    <cofactor evidence="1">
        <name>Mn(2+)</name>
        <dbReference type="ChEBI" id="CHEBI:29035"/>
    </cofactor>
</comment>
<comment type="pathway">
    <text evidence="1">Carbohydrate biosynthesis; gluconeogenesis.</text>
</comment>
<comment type="similarity">
    <text evidence="1">Belongs to the FBPase class 3 family.</text>
</comment>
<sequence length="650" mass="75278">MHNSTDKSVKERFLDLLSEQFNTKEALATEIINLESILELPKGTEHFVSDLHGEFHSFQHVLRNGSGNVRSKINDIFQDTLTRKEINEFSALVYYPEEKLQLIKNSFSSKSELNEWYITTINRLIKLITYASSKYTRTKLRKSLPENYVFIVEELLYKSNKYNNKHSYYETLIKQIIELEQSDDLIIGLSFTVQHLVVNHLHVVGDIYDRGPEPDKIMETLIDYPSVDIQWGNHDVLWIGAYAGSKVCLANLLRICARYDNLDIIEDAYGINLRPLLTLADKYYDGSNPAFRPKNAEGLSELELEQITKLHQAIAIIQFKLEAPIIKRRPAFEMEERLVLEKIDYDKNEATLYGKTYPLEHTCFQTVDPNDPNKLTDEEADVIDKLLLSVQQSEKLKRHMTFLMQKGKLYLPYNGNLLIHGCIPVDEQGEMESMVIDGVKCYGRDLLDHFEEYVRIAFDHKDIQDDLATDLVWYLWTGKYSSLFGKRAMTTFERYFIKDKTAHKETKNPYYYLREDVDMCKKMLKDFGLDPEQGHIINGHTPVKEIDGEDPIKADGKMIVIDGGFSKAYQSTTGIAGYTLLYNSFGMQLVAHQHFNSKKHVLLNGADELSIRRVVDKELQRKKIRDTNTGHEIQAQIDILKELMHDRFVN</sequence>
<name>F16PC_STAXY</name>
<evidence type="ECO:0000255" key="1">
    <source>
        <dbReference type="HAMAP-Rule" id="MF_01854"/>
    </source>
</evidence>
<reference key="1">
    <citation type="journal article" date="2007" name="FEMS Microbiol. Lett.">
        <title>Physical and genetic map of the Staphylococcus xylosus C2a chromosome.</title>
        <authorList>
            <person name="Dordet-Frisoni E."/>
            <person name="Talon R."/>
            <person name="Leroy S."/>
        </authorList>
    </citation>
    <scope>NUCLEOTIDE SEQUENCE [GENOMIC DNA]</scope>
    <source>
        <strain>DSM 20267 / Isolate C2A</strain>
    </source>
</reference>
<accession>A0SJA5</accession>
<proteinExistence type="inferred from homology"/>